<feature type="chain" id="PRO_0000096928" description="DNA-packaging protein NU1 homolog">
    <location>
        <begin position="1"/>
        <end position="181"/>
    </location>
</feature>
<gene>
    <name type="primary">nohD</name>
    <name type="synonym">nohB</name>
    <name type="ordered locus">b0560</name>
    <name type="ordered locus">JW0549</name>
</gene>
<dbReference type="EMBL" id="U00096">
    <property type="protein sequence ID" value="AAC73661.1"/>
    <property type="molecule type" value="Genomic_DNA"/>
</dbReference>
<dbReference type="EMBL" id="AP009048">
    <property type="protein sequence ID" value="BAE76336.1"/>
    <property type="molecule type" value="Genomic_DNA"/>
</dbReference>
<dbReference type="EMBL" id="D00928">
    <property type="status" value="NOT_ANNOTATED_CDS"/>
    <property type="molecule type" value="Genomic_DNA"/>
</dbReference>
<dbReference type="PIR" id="F64788">
    <property type="entry name" value="F64788"/>
</dbReference>
<dbReference type="RefSeq" id="NP_415092.1">
    <property type="nucleotide sequence ID" value="NC_000913.3"/>
</dbReference>
<dbReference type="RefSeq" id="WP_000453566.1">
    <property type="nucleotide sequence ID" value="NZ_CP064683.1"/>
</dbReference>
<dbReference type="BMRB" id="P31062"/>
<dbReference type="SMR" id="P31062"/>
<dbReference type="BioGRID" id="4261544">
    <property type="interactions" value="132"/>
</dbReference>
<dbReference type="BioGRID" id="849558">
    <property type="interactions" value="1"/>
</dbReference>
<dbReference type="FunCoup" id="P31062">
    <property type="interactions" value="73"/>
</dbReference>
<dbReference type="IntAct" id="P31062">
    <property type="interactions" value="12"/>
</dbReference>
<dbReference type="STRING" id="511145.b0560"/>
<dbReference type="PaxDb" id="511145-b0560"/>
<dbReference type="EnsemblBacteria" id="AAC73661">
    <property type="protein sequence ID" value="AAC73661"/>
    <property type="gene ID" value="b0560"/>
</dbReference>
<dbReference type="GeneID" id="945172"/>
<dbReference type="KEGG" id="ecj:JW0549"/>
<dbReference type="KEGG" id="eco:b0560"/>
<dbReference type="KEGG" id="ecoc:C3026_02775"/>
<dbReference type="PATRIC" id="fig|511145.12.peg.584"/>
<dbReference type="EchoBASE" id="EB1591"/>
<dbReference type="eggNOG" id="COG4220">
    <property type="taxonomic scope" value="Bacteria"/>
</dbReference>
<dbReference type="HOGENOM" id="CLU_101608_0_1_6"/>
<dbReference type="InParanoid" id="P31062"/>
<dbReference type="OMA" id="ENRHIEF"/>
<dbReference type="OrthoDB" id="5875302at2"/>
<dbReference type="PhylomeDB" id="P31062"/>
<dbReference type="BioCyc" id="EcoCyc:EG11635-MONOMER"/>
<dbReference type="PRO" id="PR:P31062"/>
<dbReference type="Proteomes" id="UP000000625">
    <property type="component" value="Chromosome"/>
</dbReference>
<dbReference type="Gene3D" id="1.10.10.10">
    <property type="entry name" value="Winged helix-like DNA-binding domain superfamily/Winged helix DNA-binding domain"/>
    <property type="match status" value="1"/>
</dbReference>
<dbReference type="InterPro" id="IPR009061">
    <property type="entry name" value="DNA-bd_dom_put_sf"/>
</dbReference>
<dbReference type="InterPro" id="IPR010906">
    <property type="entry name" value="Phage_lambda_Nu1_terminase-ssu"/>
</dbReference>
<dbReference type="InterPro" id="IPR036388">
    <property type="entry name" value="WH-like_DNA-bd_sf"/>
</dbReference>
<dbReference type="Pfam" id="PF07471">
    <property type="entry name" value="Phage_Nu1"/>
    <property type="match status" value="1"/>
</dbReference>
<dbReference type="SUPFAM" id="SSF46955">
    <property type="entry name" value="Putative DNA-binding domain"/>
    <property type="match status" value="1"/>
</dbReference>
<sequence>MEVNKKQLADIFGASIRTIQNWQEQGMPVLRGGGKGNEVLYDSAAVIKWYAERDAEIENEKLRREVEELLQASETDLQPGTIEYERHRLTRAQADAQELKNARDSAEVVETAFCTFVLSRIAGEIASILDGIPLSVQRRFPELENRHVDFLKRDIIKAMNKAAALDELIPGLLSEYIEQSG</sequence>
<reference key="1">
    <citation type="journal article" date="1997" name="Science">
        <title>The complete genome sequence of Escherichia coli K-12.</title>
        <authorList>
            <person name="Blattner F.R."/>
            <person name="Plunkett G. III"/>
            <person name="Bloch C.A."/>
            <person name="Perna N.T."/>
            <person name="Burland V."/>
            <person name="Riley M."/>
            <person name="Collado-Vides J."/>
            <person name="Glasner J.D."/>
            <person name="Rode C.K."/>
            <person name="Mayhew G.F."/>
            <person name="Gregor J."/>
            <person name="Davis N.W."/>
            <person name="Kirkpatrick H.A."/>
            <person name="Goeden M.A."/>
            <person name="Rose D.J."/>
            <person name="Mau B."/>
            <person name="Shao Y."/>
        </authorList>
    </citation>
    <scope>NUCLEOTIDE SEQUENCE [LARGE SCALE GENOMIC DNA]</scope>
    <source>
        <strain>K12 / MG1655 / ATCC 47076</strain>
    </source>
</reference>
<reference key="2">
    <citation type="journal article" date="2006" name="Mol. Syst. Biol.">
        <title>Highly accurate genome sequences of Escherichia coli K-12 strains MG1655 and W3110.</title>
        <authorList>
            <person name="Hayashi K."/>
            <person name="Morooka N."/>
            <person name="Yamamoto Y."/>
            <person name="Fujita K."/>
            <person name="Isono K."/>
            <person name="Choi S."/>
            <person name="Ohtsubo E."/>
            <person name="Baba T."/>
            <person name="Wanner B.L."/>
            <person name="Mori H."/>
            <person name="Horiuchi T."/>
        </authorList>
    </citation>
    <scope>NUCLEOTIDE SEQUENCE [LARGE SCALE GENOMIC DNA]</scope>
    <source>
        <strain>K12 / W3110 / ATCC 27325 / DSM 5911</strain>
    </source>
</reference>
<reference key="3">
    <citation type="journal article" date="1992" name="Nucleic Acids Res.">
        <title>Site-specific dissection of E. coli chromosome by lambda terminase.</title>
        <authorList>
            <person name="Kotani H."/>
            <person name="Kawamura A."/>
            <person name="Takahashi A."/>
            <person name="Nakatsuji M."/>
            <person name="Hiraoka N."/>
            <person name="Nakajima K."/>
            <person name="Takanami M."/>
        </authorList>
    </citation>
    <scope>NUCLEOTIDE SEQUENCE [GENOMIC DNA] OF 1-147</scope>
    <source>
        <strain>K12 / W3110 / ATCC 27325 / DSM 5911</strain>
    </source>
</reference>
<comment type="miscellaneous">
    <text>Encoded by the cryptic lambdoid prophage DLP12.</text>
</comment>
<comment type="similarity">
    <text evidence="1">To phage lambda DNA packaging protein NU1.</text>
</comment>
<proteinExistence type="predicted"/>
<evidence type="ECO:0000305" key="1"/>
<name>NOHD_ECOLI</name>
<organism>
    <name type="scientific">Escherichia coli (strain K12)</name>
    <dbReference type="NCBI Taxonomy" id="83333"/>
    <lineage>
        <taxon>Bacteria</taxon>
        <taxon>Pseudomonadati</taxon>
        <taxon>Pseudomonadota</taxon>
        <taxon>Gammaproteobacteria</taxon>
        <taxon>Enterobacterales</taxon>
        <taxon>Enterobacteriaceae</taxon>
        <taxon>Escherichia</taxon>
    </lineage>
</organism>
<protein>
    <recommendedName>
        <fullName>DNA-packaging protein NU1 homolog</fullName>
    </recommendedName>
</protein>
<accession>P31062</accession>
<accession>P75721</accession>
<accession>Q2MBM0</accession>
<keyword id="KW-1185">Reference proteome</keyword>